<sequence length="433" mass="45676">MTAPTLNTTRSQELFSAAQALMPGGVSSPVRAFRSVGGQPLVFDRVKGPYAWDVDGNKYIDYIGSWGPAICGHAHPEVISALQEAIEKGTSFGAPCALENTLAEMVIDAVPSVEMVRFVNSGTEACMAVLRLMRAFTGRDKVIKFEGCYHGHADMFLVKAGSGVATLGLPDSPGVPRSTTANTLTAPYNDLEAVKQLFAENPDAISGVILEPIVGNAGFIQPEPGFLEGLRELTKEHGALLVFDEVMTGFRISYGGAQAHFGVTPDLTTMGKVIGGGLPVGAYGGRRDIMEMVAPAGPMYQAGTLSGNPLAMTAGIKTLELLRQPGTYEKLTATTEKLIAGIKEAASAAGLPITGGSVSAMFGFFLCEGPVRNFEEAKATDAERFGKLHRAMLQRGVYLAPSAFEAGFTSLAHSDGDIEATLQAFRESFAEIA</sequence>
<reference key="1">
    <citation type="submission" date="2006-05" db="EMBL/GenBank/DDBJ databases">
        <authorList>
            <consortium name="Genoscope"/>
        </authorList>
    </citation>
    <scope>NUCLEOTIDE SEQUENCE [LARGE SCALE GENOMIC DNA]</scope>
    <source>
        <strain>WH7803</strain>
    </source>
</reference>
<name>GSA_SYNPW</name>
<protein>
    <recommendedName>
        <fullName evidence="1">Glutamate-1-semialdehyde 2,1-aminomutase</fullName>
        <shortName evidence="1">GSA</shortName>
        <ecNumber evidence="1">5.4.3.8</ecNumber>
    </recommendedName>
    <alternativeName>
        <fullName evidence="1">Glutamate-1-semialdehyde aminotransferase</fullName>
        <shortName evidence="1">GSA-AT</shortName>
    </alternativeName>
</protein>
<feature type="chain" id="PRO_0000300953" description="Glutamate-1-semialdehyde 2,1-aminomutase">
    <location>
        <begin position="1"/>
        <end position="433"/>
    </location>
</feature>
<feature type="modified residue" description="N6-(pyridoxal phosphate)lysine" evidence="1">
    <location>
        <position position="272"/>
    </location>
</feature>
<proteinExistence type="inferred from homology"/>
<organism>
    <name type="scientific">Synechococcus sp. (strain WH7803)</name>
    <dbReference type="NCBI Taxonomy" id="32051"/>
    <lineage>
        <taxon>Bacteria</taxon>
        <taxon>Bacillati</taxon>
        <taxon>Cyanobacteriota</taxon>
        <taxon>Cyanophyceae</taxon>
        <taxon>Synechococcales</taxon>
        <taxon>Synechococcaceae</taxon>
        <taxon>Synechococcus</taxon>
    </lineage>
</organism>
<evidence type="ECO:0000255" key="1">
    <source>
        <dbReference type="HAMAP-Rule" id="MF_00375"/>
    </source>
</evidence>
<gene>
    <name evidence="1" type="primary">hemL</name>
    <name type="ordered locus">SynWH7803_1821</name>
</gene>
<accession>A5GMT2</accession>
<dbReference type="EC" id="5.4.3.8" evidence="1"/>
<dbReference type="EMBL" id="CT971583">
    <property type="protein sequence ID" value="CAK24247.1"/>
    <property type="molecule type" value="Genomic_DNA"/>
</dbReference>
<dbReference type="SMR" id="A5GMT2"/>
<dbReference type="STRING" id="32051.SynWH7803_1821"/>
<dbReference type="KEGG" id="syx:SynWH7803_1821"/>
<dbReference type="eggNOG" id="COG0001">
    <property type="taxonomic scope" value="Bacteria"/>
</dbReference>
<dbReference type="HOGENOM" id="CLU_016922_1_5_3"/>
<dbReference type="OrthoDB" id="9807885at2"/>
<dbReference type="UniPathway" id="UPA00251">
    <property type="reaction ID" value="UER00317"/>
</dbReference>
<dbReference type="UniPathway" id="UPA00668"/>
<dbReference type="Proteomes" id="UP000001566">
    <property type="component" value="Chromosome"/>
</dbReference>
<dbReference type="GO" id="GO:0005737">
    <property type="term" value="C:cytoplasm"/>
    <property type="evidence" value="ECO:0007669"/>
    <property type="project" value="UniProtKB-SubCell"/>
</dbReference>
<dbReference type="GO" id="GO:0042286">
    <property type="term" value="F:glutamate-1-semialdehyde 2,1-aminomutase activity"/>
    <property type="evidence" value="ECO:0007669"/>
    <property type="project" value="UniProtKB-UniRule"/>
</dbReference>
<dbReference type="GO" id="GO:0030170">
    <property type="term" value="F:pyridoxal phosphate binding"/>
    <property type="evidence" value="ECO:0007669"/>
    <property type="project" value="InterPro"/>
</dbReference>
<dbReference type="GO" id="GO:0008483">
    <property type="term" value="F:transaminase activity"/>
    <property type="evidence" value="ECO:0007669"/>
    <property type="project" value="InterPro"/>
</dbReference>
<dbReference type="GO" id="GO:0015995">
    <property type="term" value="P:chlorophyll biosynthetic process"/>
    <property type="evidence" value="ECO:0007669"/>
    <property type="project" value="UniProtKB-UniRule"/>
</dbReference>
<dbReference type="GO" id="GO:0006782">
    <property type="term" value="P:protoporphyrinogen IX biosynthetic process"/>
    <property type="evidence" value="ECO:0007669"/>
    <property type="project" value="UniProtKB-UniRule"/>
</dbReference>
<dbReference type="CDD" id="cd00610">
    <property type="entry name" value="OAT_like"/>
    <property type="match status" value="1"/>
</dbReference>
<dbReference type="FunFam" id="3.40.640.10:FF:000021">
    <property type="entry name" value="Glutamate-1-semialdehyde 2,1-aminomutase"/>
    <property type="match status" value="1"/>
</dbReference>
<dbReference type="Gene3D" id="3.90.1150.10">
    <property type="entry name" value="Aspartate Aminotransferase, domain 1"/>
    <property type="match status" value="1"/>
</dbReference>
<dbReference type="Gene3D" id="3.40.640.10">
    <property type="entry name" value="Type I PLP-dependent aspartate aminotransferase-like (Major domain)"/>
    <property type="match status" value="1"/>
</dbReference>
<dbReference type="HAMAP" id="MF_00375">
    <property type="entry name" value="HemL_aminotrans_3"/>
    <property type="match status" value="1"/>
</dbReference>
<dbReference type="InterPro" id="IPR004639">
    <property type="entry name" value="4pyrrol_synth_GluAld_NH2Trfase"/>
</dbReference>
<dbReference type="InterPro" id="IPR005814">
    <property type="entry name" value="Aminotrans_3"/>
</dbReference>
<dbReference type="InterPro" id="IPR049704">
    <property type="entry name" value="Aminotrans_3_PPA_site"/>
</dbReference>
<dbReference type="InterPro" id="IPR015424">
    <property type="entry name" value="PyrdxlP-dep_Trfase"/>
</dbReference>
<dbReference type="InterPro" id="IPR015421">
    <property type="entry name" value="PyrdxlP-dep_Trfase_major"/>
</dbReference>
<dbReference type="InterPro" id="IPR015422">
    <property type="entry name" value="PyrdxlP-dep_Trfase_small"/>
</dbReference>
<dbReference type="NCBIfam" id="TIGR00713">
    <property type="entry name" value="hemL"/>
    <property type="match status" value="1"/>
</dbReference>
<dbReference type="NCBIfam" id="NF000818">
    <property type="entry name" value="PRK00062.1"/>
    <property type="match status" value="1"/>
</dbReference>
<dbReference type="PANTHER" id="PTHR43713">
    <property type="entry name" value="GLUTAMATE-1-SEMIALDEHYDE 2,1-AMINOMUTASE"/>
    <property type="match status" value="1"/>
</dbReference>
<dbReference type="PANTHER" id="PTHR43713:SF3">
    <property type="entry name" value="GLUTAMATE-1-SEMIALDEHYDE 2,1-AMINOMUTASE 1, CHLOROPLASTIC-RELATED"/>
    <property type="match status" value="1"/>
</dbReference>
<dbReference type="Pfam" id="PF00202">
    <property type="entry name" value="Aminotran_3"/>
    <property type="match status" value="1"/>
</dbReference>
<dbReference type="SUPFAM" id="SSF53383">
    <property type="entry name" value="PLP-dependent transferases"/>
    <property type="match status" value="1"/>
</dbReference>
<dbReference type="PROSITE" id="PS00600">
    <property type="entry name" value="AA_TRANSFER_CLASS_3"/>
    <property type="match status" value="1"/>
</dbReference>
<keyword id="KW-0149">Chlorophyll biosynthesis</keyword>
<keyword id="KW-0963">Cytoplasm</keyword>
<keyword id="KW-0413">Isomerase</keyword>
<keyword id="KW-0627">Porphyrin biosynthesis</keyword>
<keyword id="KW-0663">Pyridoxal phosphate</keyword>
<keyword id="KW-1185">Reference proteome</keyword>
<comment type="catalytic activity">
    <reaction evidence="1">
        <text>(S)-4-amino-5-oxopentanoate = 5-aminolevulinate</text>
        <dbReference type="Rhea" id="RHEA:14265"/>
        <dbReference type="ChEBI" id="CHEBI:57501"/>
        <dbReference type="ChEBI" id="CHEBI:356416"/>
        <dbReference type="EC" id="5.4.3.8"/>
    </reaction>
</comment>
<comment type="cofactor">
    <cofactor evidence="1">
        <name>pyridoxal 5'-phosphate</name>
        <dbReference type="ChEBI" id="CHEBI:597326"/>
    </cofactor>
</comment>
<comment type="pathway">
    <text evidence="1">Porphyrin-containing compound metabolism; protoporphyrin-IX biosynthesis; 5-aminolevulinate from L-glutamyl-tRNA(Glu): step 2/2.</text>
</comment>
<comment type="pathway">
    <text evidence="1">Porphyrin-containing compound metabolism; chlorophyll biosynthesis.</text>
</comment>
<comment type="subunit">
    <text evidence="1">Homodimer.</text>
</comment>
<comment type="subcellular location">
    <subcellularLocation>
        <location evidence="1">Cytoplasm</location>
    </subcellularLocation>
</comment>
<comment type="similarity">
    <text evidence="1">Belongs to the class-III pyridoxal-phosphate-dependent aminotransferase family. HemL subfamily.</text>
</comment>